<organism>
    <name type="scientific">Bluetongue virus 17 (isolate USA)</name>
    <name type="common">BTV 17</name>
    <dbReference type="NCBI Taxonomy" id="33718"/>
    <lineage>
        <taxon>Viruses</taxon>
        <taxon>Riboviria</taxon>
        <taxon>Orthornavirae</taxon>
        <taxon>Duplornaviricota</taxon>
        <taxon>Resentoviricetes</taxon>
        <taxon>Reovirales</taxon>
        <taxon>Sedoreoviridae</taxon>
        <taxon>Orbivirus</taxon>
        <taxon>Bluetongue virus</taxon>
    </lineage>
</organism>
<organismHost>
    <name type="scientific">Antilocapra americana</name>
    <name type="common">Pronghorn</name>
    <dbReference type="NCBI Taxonomy" id="9891"/>
</organismHost>
<organismHost>
    <name type="scientific">Bos taurus</name>
    <name type="common">Bovine</name>
    <dbReference type="NCBI Taxonomy" id="9913"/>
</organismHost>
<organismHost>
    <name type="scientific">Capra hircus</name>
    <name type="common">Goat</name>
    <dbReference type="NCBI Taxonomy" id="9925"/>
</organismHost>
<organismHost>
    <name type="scientific">Culicoides variipennis</name>
    <name type="common">Biting midge</name>
    <dbReference type="NCBI Taxonomy" id="46212"/>
</organismHost>
<organismHost>
    <name type="scientific">Ovis aries</name>
    <name type="common">Sheep</name>
    <dbReference type="NCBI Taxonomy" id="9940"/>
</organismHost>
<gene>
    <name type="primary">Segment-8</name>
</gene>
<proteinExistence type="predicted"/>
<protein>
    <recommendedName>
        <fullName>Non-structural protein NS2</fullName>
    </recommendedName>
</protein>
<name>VNS2_BTV17</name>
<evidence type="ECO:0000256" key="1">
    <source>
        <dbReference type="SAM" id="MobiDB-lite"/>
    </source>
</evidence>
<feature type="chain" id="PRO_0000222677" description="Non-structural protein NS2">
    <location>
        <begin position="1"/>
        <end position="354"/>
    </location>
</feature>
<feature type="region of interest" description="Disordered" evidence="1">
    <location>
        <begin position="163"/>
        <end position="196"/>
    </location>
</feature>
<feature type="region of interest" description="Disordered" evidence="1">
    <location>
        <begin position="229"/>
        <end position="269"/>
    </location>
</feature>
<feature type="compositionally biased region" description="Basic and acidic residues" evidence="1">
    <location>
        <begin position="178"/>
        <end position="196"/>
    </location>
</feature>
<feature type="compositionally biased region" description="Basic and acidic residues" evidence="1">
    <location>
        <begin position="237"/>
        <end position="249"/>
    </location>
</feature>
<feature type="compositionally biased region" description="Acidic residues" evidence="1">
    <location>
        <begin position="250"/>
        <end position="260"/>
    </location>
</feature>
<keyword id="KW-0694">RNA-binding</keyword>
<dbReference type="PIR" id="A60015">
    <property type="entry name" value="A60015"/>
</dbReference>
<dbReference type="SMR" id="P33473"/>
<dbReference type="GO" id="GO:0003723">
    <property type="term" value="F:RNA binding"/>
    <property type="evidence" value="ECO:0007669"/>
    <property type="project" value="UniProtKB-KW"/>
</dbReference>
<dbReference type="InterPro" id="IPR007602">
    <property type="entry name" value="BTV_NS2"/>
</dbReference>
<dbReference type="InterPro" id="IPR037194">
    <property type="entry name" value="NS2_N"/>
</dbReference>
<dbReference type="Pfam" id="PF04514">
    <property type="entry name" value="BTV_NS2"/>
    <property type="match status" value="1"/>
</dbReference>
<dbReference type="SUPFAM" id="SSF110132">
    <property type="entry name" value="BTV NS2-like ssRNA-binding domain"/>
    <property type="match status" value="1"/>
</dbReference>
<comment type="function">
    <text>Single-stranded RNA-binding protein.</text>
</comment>
<accession>P33473</accession>
<reference key="1">
    <citation type="journal article" date="1990" name="Virus Res.">
        <title>Nucleotide and deduced amino acid sequence of the nonstructural phosphoprotein, NS2, of bluetongue virus serotype 17: comparison to two isolates of serotype 10.</title>
        <authorList>
            <person name="Grubman M.J."/>
            <person name="Zellner M."/>
            <person name="Samal S."/>
        </authorList>
    </citation>
    <scope>NUCLEOTIDE SEQUENCE</scope>
</reference>
<sequence length="354" mass="40584">MEQKQRRFTKNIFVLDITAKTLCGAIAKLSSQPYCQIKIGRVVAFKPVKNPEPKGYVLNVPGPGAYRIQDGQDIISLMLTPHGVEATTERWEEWKFEGVSVTPMATRVQYNGVMVDAEIKYCKGMGIVQPYMRNDFDRNEMPDLPGVMRSNYDIRELRQKIKNERESAPRLQVQSVASREESRWMDDDEAKVDNEAKEIIPGTSGLEKLREARSNVFKEVETVINWNLDERDEEDRDERGDEEQVKTLSDDDDQGEDASDDEHPKTHITKEYIEKVAKQIKLKDERFMSLSSAMPQASGGFDRMIVTKKLKWQNVPLYCFDESLKRYELQCVGACERVAFVSKDMSLIILPVGV</sequence>